<organism>
    <name type="scientific">Rattus norvegicus</name>
    <name type="common">Rat</name>
    <dbReference type="NCBI Taxonomy" id="10116"/>
    <lineage>
        <taxon>Eukaryota</taxon>
        <taxon>Metazoa</taxon>
        <taxon>Chordata</taxon>
        <taxon>Craniata</taxon>
        <taxon>Vertebrata</taxon>
        <taxon>Euteleostomi</taxon>
        <taxon>Mammalia</taxon>
        <taxon>Eutheria</taxon>
        <taxon>Euarchontoglires</taxon>
        <taxon>Glires</taxon>
        <taxon>Rodentia</taxon>
        <taxon>Myomorpha</taxon>
        <taxon>Muroidea</taxon>
        <taxon>Muridae</taxon>
        <taxon>Murinae</taxon>
        <taxon>Rattus</taxon>
    </lineage>
</organism>
<evidence type="ECO:0000250" key="1"/>
<evidence type="ECO:0000250" key="2">
    <source>
        <dbReference type="UniProtKB" id="Q8N357"/>
    </source>
</evidence>
<evidence type="ECO:0000255" key="3"/>
<evidence type="ECO:0000305" key="4"/>
<proteinExistence type="evidence at transcript level"/>
<feature type="signal peptide" evidence="3">
    <location>
        <begin position="1"/>
        <end position="18"/>
    </location>
</feature>
<feature type="chain" id="PRO_0000232517" description="Solute carrier family 35 member F6">
    <location>
        <begin position="19"/>
        <end position="372"/>
    </location>
</feature>
<feature type="transmembrane region" description="Helical" evidence="3">
    <location>
        <begin position="48"/>
        <end position="68"/>
    </location>
</feature>
<feature type="transmembrane region" description="Helical" evidence="3">
    <location>
        <begin position="89"/>
        <end position="109"/>
    </location>
</feature>
<feature type="transmembrane region" description="Helical" evidence="3">
    <location>
        <begin position="116"/>
        <end position="136"/>
    </location>
</feature>
<feature type="transmembrane region" description="Helical" evidence="3">
    <location>
        <begin position="145"/>
        <end position="165"/>
    </location>
</feature>
<feature type="transmembrane region" description="Helical" evidence="3">
    <location>
        <begin position="176"/>
        <end position="196"/>
    </location>
</feature>
<feature type="transmembrane region" description="Helical" evidence="3">
    <location>
        <begin position="211"/>
        <end position="231"/>
    </location>
</feature>
<feature type="transmembrane region" description="Helical" evidence="3">
    <location>
        <begin position="261"/>
        <end position="281"/>
    </location>
</feature>
<feature type="transmembrane region" description="Helical" evidence="3">
    <location>
        <begin position="293"/>
        <end position="312"/>
    </location>
</feature>
<feature type="transmembrane region" description="Helical" evidence="3">
    <location>
        <begin position="320"/>
        <end position="336"/>
    </location>
</feature>
<feature type="domain" description="EamA">
    <location>
        <begin position="105"/>
        <end position="160"/>
    </location>
</feature>
<feature type="modified residue" description="Phosphothreonine" evidence="2">
    <location>
        <position position="366"/>
    </location>
</feature>
<feature type="glycosylation site" description="N-linked (GlcNAc...) asparagine" evidence="3">
    <location>
        <position position="110"/>
    </location>
</feature>
<reference key="1">
    <citation type="journal article" date="2004" name="Genome Res.">
        <title>The status, quality, and expansion of the NIH full-length cDNA project: the Mammalian Gene Collection (MGC).</title>
        <authorList>
            <consortium name="The MGC Project Team"/>
        </authorList>
    </citation>
    <scope>NUCLEOTIDE SEQUENCE [LARGE SCALE MRNA]</scope>
    <source>
        <tissue>Heart</tissue>
    </source>
</reference>
<name>S35F6_RAT</name>
<accession>Q5RKH7</accession>
<dbReference type="EMBL" id="BC085904">
    <property type="protein sequence ID" value="AAH85904.1"/>
    <property type="molecule type" value="mRNA"/>
</dbReference>
<dbReference type="RefSeq" id="NP_001017451.1">
    <property type="nucleotide sequence ID" value="NM_001017451.1"/>
</dbReference>
<dbReference type="SMR" id="Q5RKH7"/>
<dbReference type="FunCoup" id="Q5RKH7">
    <property type="interactions" value="1561"/>
</dbReference>
<dbReference type="STRING" id="10116.ENSRNOP00000012558"/>
<dbReference type="GlyCosmos" id="Q5RKH7">
    <property type="glycosylation" value="1 site, No reported glycans"/>
</dbReference>
<dbReference type="GlyGen" id="Q5RKH7">
    <property type="glycosylation" value="1 site"/>
</dbReference>
<dbReference type="PhosphoSitePlus" id="Q5RKH7"/>
<dbReference type="jPOST" id="Q5RKH7"/>
<dbReference type="PaxDb" id="10116-ENSRNOP00000012558"/>
<dbReference type="Ensembl" id="ENSRNOT00000012558.7">
    <property type="protein sequence ID" value="ENSRNOP00000012558.5"/>
    <property type="gene ID" value="ENSRNOG00000009459.8"/>
</dbReference>
<dbReference type="GeneID" id="298851"/>
<dbReference type="KEGG" id="rno:298851"/>
<dbReference type="AGR" id="RGD:1309228"/>
<dbReference type="CTD" id="54978"/>
<dbReference type="RGD" id="1309228">
    <property type="gene designation" value="Slc35f6"/>
</dbReference>
<dbReference type="eggNOG" id="KOG3912">
    <property type="taxonomic scope" value="Eukaryota"/>
</dbReference>
<dbReference type="GeneTree" id="ENSGT00390000017237"/>
<dbReference type="HOGENOM" id="CLU_025028_1_0_1"/>
<dbReference type="InParanoid" id="Q5RKH7"/>
<dbReference type="OMA" id="FIYKHNV"/>
<dbReference type="PhylomeDB" id="Q5RKH7"/>
<dbReference type="TreeFam" id="TF105890"/>
<dbReference type="PRO" id="PR:Q5RKH7"/>
<dbReference type="Proteomes" id="UP000002494">
    <property type="component" value="Chromosome 6"/>
</dbReference>
<dbReference type="Bgee" id="ENSRNOG00000009459">
    <property type="expression patterns" value="Expressed in liver and 19 other cell types or tissues"/>
</dbReference>
<dbReference type="GO" id="GO:0043231">
    <property type="term" value="C:intracellular membrane-bounded organelle"/>
    <property type="evidence" value="ECO:0000318"/>
    <property type="project" value="GO_Central"/>
</dbReference>
<dbReference type="GO" id="GO:0005765">
    <property type="term" value="C:lysosomal membrane"/>
    <property type="evidence" value="ECO:0000250"/>
    <property type="project" value="UniProtKB"/>
</dbReference>
<dbReference type="GO" id="GO:0005764">
    <property type="term" value="C:lysosome"/>
    <property type="evidence" value="ECO:0000266"/>
    <property type="project" value="RGD"/>
</dbReference>
<dbReference type="GO" id="GO:0016020">
    <property type="term" value="C:membrane"/>
    <property type="evidence" value="ECO:0000318"/>
    <property type="project" value="GO_Central"/>
</dbReference>
<dbReference type="GO" id="GO:0005739">
    <property type="term" value="C:mitochondrion"/>
    <property type="evidence" value="ECO:0000250"/>
    <property type="project" value="UniProtKB"/>
</dbReference>
<dbReference type="GO" id="GO:0022857">
    <property type="term" value="F:transmembrane transporter activity"/>
    <property type="evidence" value="ECO:0007669"/>
    <property type="project" value="InterPro"/>
</dbReference>
<dbReference type="GO" id="GO:1901029">
    <property type="term" value="P:negative regulation of mitochondrial outer membrane permeabilization involved in apoptotic signaling pathway"/>
    <property type="evidence" value="ECO:0000250"/>
    <property type="project" value="UniProtKB"/>
</dbReference>
<dbReference type="GO" id="GO:0008284">
    <property type="term" value="P:positive regulation of cell population proliferation"/>
    <property type="evidence" value="ECO:0000250"/>
    <property type="project" value="UniProtKB"/>
</dbReference>
<dbReference type="InterPro" id="IPR009262">
    <property type="entry name" value="SLC35_F1/F2/F6"/>
</dbReference>
<dbReference type="InterPro" id="IPR012404">
    <property type="entry name" value="UCP036436"/>
</dbReference>
<dbReference type="PANTHER" id="PTHR13146">
    <property type="match status" value="1"/>
</dbReference>
<dbReference type="PANTHER" id="PTHR13146:SF0">
    <property type="entry name" value="SOLUTE CARRIER FAMILY 35 MEMBER F6"/>
    <property type="match status" value="1"/>
</dbReference>
<dbReference type="Pfam" id="PF06027">
    <property type="entry name" value="SLC35F"/>
    <property type="match status" value="1"/>
</dbReference>
<dbReference type="PIRSF" id="PIRSF036436">
    <property type="entry name" value="UCP036436"/>
    <property type="match status" value="1"/>
</dbReference>
<dbReference type="SUPFAM" id="SSF103481">
    <property type="entry name" value="Multidrug resistance efflux transporter EmrE"/>
    <property type="match status" value="1"/>
</dbReference>
<keyword id="KW-0325">Glycoprotein</keyword>
<keyword id="KW-0458">Lysosome</keyword>
<keyword id="KW-0472">Membrane</keyword>
<keyword id="KW-0496">Mitochondrion</keyword>
<keyword id="KW-0597">Phosphoprotein</keyword>
<keyword id="KW-1185">Reference proteome</keyword>
<keyword id="KW-0732">Signal</keyword>
<keyword id="KW-0812">Transmembrane</keyword>
<keyword id="KW-1133">Transmembrane helix</keyword>
<keyword id="KW-0813">Transport</keyword>
<protein>
    <recommendedName>
        <fullName>Solute carrier family 35 member F6</fullName>
    </recommendedName>
    <alternativeName>
        <fullName>ANT2-binding protein</fullName>
        <shortName>ANT2BP</shortName>
    </alternativeName>
    <alternativeName>
        <fullName>Transport and Golgi organization 9 homolog</fullName>
    </alternativeName>
</protein>
<sequence length="372" mass="41092">MAWTKYQLFLAGLMLVTGSINTLSAKWADNFEAEGCGGSQEHSFKHPFVQAVGMFLGEFSCLAAFYLLKCRARRQSDSSVEPRQPFNALLFLPPALCDMTGTSIMYVALNMTSASSFQMLRGAVIIFTGLFSVAFLDRRLVPSQWLGILITIAGLVVVGLADLLSKHDSQHKLSEVITGDLLIIMAQIIIAIQMVLEEKFVYKHNIHPLQAVGIEGFFGFVILSLLLVPMYYIPTASFSGNPRGVLEDALDAFCQVGRQPLIALALLGNISSIAFFNFSGISVTKELSATTRMVLDTLRTVVIWAFTLALGWEVFHPLQILGFLILLMGTALYNGLHRPLLACLSRRWRHPTQEGEQERLLGDSRTPINETS</sequence>
<gene>
    <name type="primary">Slc35f6</name>
</gene>
<comment type="function">
    <text evidence="1">Involved in the maintenance of mitochondrial membrane potential in pancreatic ductal adenocarcinoma (PDAC) cells. Promotes pancreatic ductal adenocarcinoma (PDAC) cell growth. May play a role as a nucleotide-sugar transporter (By similarity).</text>
</comment>
<comment type="subunit">
    <text evidence="1">Interacts with SLC25A5.</text>
</comment>
<comment type="subcellular location">
    <subcellularLocation>
        <location evidence="1">Mitochondrion</location>
    </subcellularLocation>
    <subcellularLocation>
        <location evidence="1">Lysosome membrane</location>
        <topology evidence="1">Multi-pass membrane protein</topology>
    </subcellularLocation>
</comment>
<comment type="similarity">
    <text evidence="4">Belongs to the SLC35F solute transporter family.</text>
</comment>